<gene>
    <name evidence="1" type="primary">thiM</name>
    <name type="ordered locus">RHE_PE00337</name>
</gene>
<protein>
    <recommendedName>
        <fullName evidence="1">Hydroxyethylthiazole kinase</fullName>
        <ecNumber evidence="1">2.7.1.50</ecNumber>
    </recommendedName>
    <alternativeName>
        <fullName evidence="1">4-methyl-5-beta-hydroxyethylthiazole kinase</fullName>
        <shortName evidence="1">TH kinase</shortName>
        <shortName evidence="1">Thz kinase</shortName>
    </alternativeName>
</protein>
<geneLocation type="plasmid">
    <name>p42e</name>
</geneLocation>
<accession>Q2K0X8</accession>
<feature type="chain" id="PRO_0000383889" description="Hydroxyethylthiazole kinase">
    <location>
        <begin position="1"/>
        <end position="258"/>
    </location>
</feature>
<feature type="binding site" evidence="1">
    <location>
        <position position="37"/>
    </location>
    <ligand>
        <name>substrate</name>
    </ligand>
</feature>
<feature type="binding site" evidence="1">
    <location>
        <position position="112"/>
    </location>
    <ligand>
        <name>ATP</name>
        <dbReference type="ChEBI" id="CHEBI:30616"/>
    </ligand>
</feature>
<feature type="binding site" evidence="1">
    <location>
        <position position="158"/>
    </location>
    <ligand>
        <name>ATP</name>
        <dbReference type="ChEBI" id="CHEBI:30616"/>
    </ligand>
</feature>
<feature type="binding site" evidence="1">
    <location>
        <position position="185"/>
    </location>
    <ligand>
        <name>substrate</name>
    </ligand>
</feature>
<keyword id="KW-0067">ATP-binding</keyword>
<keyword id="KW-0418">Kinase</keyword>
<keyword id="KW-0460">Magnesium</keyword>
<keyword id="KW-0479">Metal-binding</keyword>
<keyword id="KW-0547">Nucleotide-binding</keyword>
<keyword id="KW-0614">Plasmid</keyword>
<keyword id="KW-1185">Reference proteome</keyword>
<keyword id="KW-0784">Thiamine biosynthesis</keyword>
<keyword id="KW-0808">Transferase</keyword>
<sequence>MLDAMREKPPLVHCITNYVAMNIAANVLLASGASPAMVHAPEEAGEFAGIASALTVNIGTLSTQWIDGMQAAAKAAASAGKPWVLDPVAHYATTFRRQAVADLLALKPTIIRGNASEIIALAGGESRGQGVDSRDPVEQAEDSARRLAERQQAIVAVTGAVDFVTDGERAVRIKGGSVLMPEVTALGCSLTCLIGAFAATAPEDLFGATVAALATFAVAGEDAALGAAGPGSFAWRFLDALAALDGEALDARARVSLA</sequence>
<proteinExistence type="inferred from homology"/>
<dbReference type="EC" id="2.7.1.50" evidence="1"/>
<dbReference type="EMBL" id="CP000137">
    <property type="protein sequence ID" value="ABC93772.1"/>
    <property type="molecule type" value="Genomic_DNA"/>
</dbReference>
<dbReference type="SMR" id="Q2K0X8"/>
<dbReference type="KEGG" id="ret:RHE_PE00337"/>
<dbReference type="HOGENOM" id="CLU_019943_0_1_5"/>
<dbReference type="UniPathway" id="UPA00060">
    <property type="reaction ID" value="UER00139"/>
</dbReference>
<dbReference type="Proteomes" id="UP000001936">
    <property type="component" value="Plasmid p42e"/>
</dbReference>
<dbReference type="GO" id="GO:0005524">
    <property type="term" value="F:ATP binding"/>
    <property type="evidence" value="ECO:0007669"/>
    <property type="project" value="UniProtKB-UniRule"/>
</dbReference>
<dbReference type="GO" id="GO:0004417">
    <property type="term" value="F:hydroxyethylthiazole kinase activity"/>
    <property type="evidence" value="ECO:0007669"/>
    <property type="project" value="UniProtKB-UniRule"/>
</dbReference>
<dbReference type="GO" id="GO:0000287">
    <property type="term" value="F:magnesium ion binding"/>
    <property type="evidence" value="ECO:0007669"/>
    <property type="project" value="UniProtKB-UniRule"/>
</dbReference>
<dbReference type="GO" id="GO:0009228">
    <property type="term" value="P:thiamine biosynthetic process"/>
    <property type="evidence" value="ECO:0007669"/>
    <property type="project" value="UniProtKB-KW"/>
</dbReference>
<dbReference type="GO" id="GO:0009229">
    <property type="term" value="P:thiamine diphosphate biosynthetic process"/>
    <property type="evidence" value="ECO:0007669"/>
    <property type="project" value="UniProtKB-UniRule"/>
</dbReference>
<dbReference type="CDD" id="cd01170">
    <property type="entry name" value="THZ_kinase"/>
    <property type="match status" value="1"/>
</dbReference>
<dbReference type="Gene3D" id="3.40.1190.20">
    <property type="match status" value="1"/>
</dbReference>
<dbReference type="HAMAP" id="MF_00228">
    <property type="entry name" value="Thz_kinase"/>
    <property type="match status" value="1"/>
</dbReference>
<dbReference type="InterPro" id="IPR000417">
    <property type="entry name" value="Hyethyz_kinase"/>
</dbReference>
<dbReference type="InterPro" id="IPR029056">
    <property type="entry name" value="Ribokinase-like"/>
</dbReference>
<dbReference type="NCBIfam" id="NF006830">
    <property type="entry name" value="PRK09355.1"/>
    <property type="match status" value="1"/>
</dbReference>
<dbReference type="NCBIfam" id="TIGR00694">
    <property type="entry name" value="thiM"/>
    <property type="match status" value="1"/>
</dbReference>
<dbReference type="Pfam" id="PF02110">
    <property type="entry name" value="HK"/>
    <property type="match status" value="1"/>
</dbReference>
<dbReference type="PIRSF" id="PIRSF000513">
    <property type="entry name" value="Thz_kinase"/>
    <property type="match status" value="1"/>
</dbReference>
<dbReference type="PRINTS" id="PR01099">
    <property type="entry name" value="HYETHTZKNASE"/>
</dbReference>
<dbReference type="SUPFAM" id="SSF53613">
    <property type="entry name" value="Ribokinase-like"/>
    <property type="match status" value="1"/>
</dbReference>
<organism>
    <name type="scientific">Rhizobium etli (strain ATCC 51251 / DSM 11541 / JCM 21823 / NBRC 15573 / CFN 42)</name>
    <dbReference type="NCBI Taxonomy" id="347834"/>
    <lineage>
        <taxon>Bacteria</taxon>
        <taxon>Pseudomonadati</taxon>
        <taxon>Pseudomonadota</taxon>
        <taxon>Alphaproteobacteria</taxon>
        <taxon>Hyphomicrobiales</taxon>
        <taxon>Rhizobiaceae</taxon>
        <taxon>Rhizobium/Agrobacterium group</taxon>
        <taxon>Rhizobium</taxon>
    </lineage>
</organism>
<reference key="1">
    <citation type="journal article" date="2006" name="Proc. Natl. Acad. Sci. U.S.A.">
        <title>The partitioned Rhizobium etli genome: genetic and metabolic redundancy in seven interacting replicons.</title>
        <authorList>
            <person name="Gonzalez V."/>
            <person name="Santamaria R.I."/>
            <person name="Bustos P."/>
            <person name="Hernandez-Gonzalez I."/>
            <person name="Medrano-Soto A."/>
            <person name="Moreno-Hagelsieb G."/>
            <person name="Janga S.C."/>
            <person name="Ramirez M.A."/>
            <person name="Jimenez-Jacinto V."/>
            <person name="Collado-Vides J."/>
            <person name="Davila G."/>
        </authorList>
    </citation>
    <scope>NUCLEOTIDE SEQUENCE [LARGE SCALE GENOMIC DNA]</scope>
    <source>
        <strain>ATCC 51251 / DSM 11541 / JCM 21823 / NBRC 15573 / CFN 42</strain>
    </source>
</reference>
<name>THIM_RHIEC</name>
<evidence type="ECO:0000255" key="1">
    <source>
        <dbReference type="HAMAP-Rule" id="MF_00228"/>
    </source>
</evidence>
<comment type="function">
    <text evidence="1">Catalyzes the phosphorylation of the hydroxyl group of 4-methyl-5-beta-hydroxyethylthiazole (THZ).</text>
</comment>
<comment type="catalytic activity">
    <reaction evidence="1">
        <text>5-(2-hydroxyethyl)-4-methylthiazole + ATP = 4-methyl-5-(2-phosphooxyethyl)-thiazole + ADP + H(+)</text>
        <dbReference type="Rhea" id="RHEA:24212"/>
        <dbReference type="ChEBI" id="CHEBI:15378"/>
        <dbReference type="ChEBI" id="CHEBI:17957"/>
        <dbReference type="ChEBI" id="CHEBI:30616"/>
        <dbReference type="ChEBI" id="CHEBI:58296"/>
        <dbReference type="ChEBI" id="CHEBI:456216"/>
        <dbReference type="EC" id="2.7.1.50"/>
    </reaction>
</comment>
<comment type="cofactor">
    <cofactor evidence="1">
        <name>Mg(2+)</name>
        <dbReference type="ChEBI" id="CHEBI:18420"/>
    </cofactor>
</comment>
<comment type="pathway">
    <text evidence="1">Cofactor biosynthesis; thiamine diphosphate biosynthesis; 4-methyl-5-(2-phosphoethyl)-thiazole from 5-(2-hydroxyethyl)-4-methylthiazole: step 1/1.</text>
</comment>
<comment type="similarity">
    <text evidence="1">Belongs to the Thz kinase family.</text>
</comment>